<organism>
    <name type="scientific">Bordetella pertussis (strain Tohama I / ATCC BAA-589 / NCTC 13251)</name>
    <dbReference type="NCBI Taxonomy" id="257313"/>
    <lineage>
        <taxon>Bacteria</taxon>
        <taxon>Pseudomonadati</taxon>
        <taxon>Pseudomonadota</taxon>
        <taxon>Betaproteobacteria</taxon>
        <taxon>Burkholderiales</taxon>
        <taxon>Alcaligenaceae</taxon>
        <taxon>Bordetella</taxon>
    </lineage>
</organism>
<gene>
    <name evidence="1" type="primary">mnmG</name>
    <name evidence="1" type="synonym">gidA</name>
    <name type="ordered locus">BP0001</name>
</gene>
<keyword id="KW-0963">Cytoplasm</keyword>
<keyword id="KW-0274">FAD</keyword>
<keyword id="KW-0285">Flavoprotein</keyword>
<keyword id="KW-0520">NAD</keyword>
<keyword id="KW-1185">Reference proteome</keyword>
<keyword id="KW-0819">tRNA processing</keyword>
<name>MNMG_BORPE</name>
<sequence>MDFPREFDVIVVGGGHAGTEAALAAARAGAQTLLLTHNIETLGQMSCNPSIGGIGKGHLVKEVDALGGAMAIATDEAGIQFRILNSSKGPAVRATRAQADRVLYRNAIRAQLENQPNLWLFQQAVDDLMVQGDQVVGAVTQIGLRFRARTVVLTAGTFLNGLIHVGLQNYSGGRAGDPPANSLGQRLKELQLPQGRLKTGTPPRIDGRSINYSVLEEQPGDLDPVPVFSFLGKASMHPRQLPCWITHTNARTHEIIRGGLDRSPMYSGVIEGVGPRYCPSIEDKIHRFADKASHQVFLEPEGLNTHEIYPNGVSTSLPFDVQYELIHSLPGLENAHILRPGYAIEYDYFDPRALKSTLETKAISGLFFAGQINGTTGYEEAAAQGLLAGANAALQAQGKEPWVPRRDEAYLGVLVDDLVTRGVTEPYRMFTSRAEYRLSLREDNADLRLTEIGRRLGLVDDVRWDAFSRKRDAVAQEVERLKSTWVNPRVLPAHAAEALLGKAIEREYSLSDLLKRPNVSYEALMQARTDEGELLAGPGVLEDQVLAEQVETQVKYAGYIARQQDEVQKHLSHEQQPIPADIDYDAVTSLSFEVRQKLKTHRPETIGQAARVSGVTPAAISLLLIHLKRLHYGSRKQAA</sequence>
<accession>Q7W0T0</accession>
<proteinExistence type="inferred from homology"/>
<dbReference type="EMBL" id="BX640411">
    <property type="protein sequence ID" value="CAE40381.1"/>
    <property type="molecule type" value="Genomic_DNA"/>
</dbReference>
<dbReference type="RefSeq" id="NP_878920.1">
    <property type="nucleotide sequence ID" value="NC_002929.2"/>
</dbReference>
<dbReference type="RefSeq" id="WP_010929569.1">
    <property type="nucleotide sequence ID" value="NZ_CP039022.1"/>
</dbReference>
<dbReference type="SMR" id="Q7W0T0"/>
<dbReference type="STRING" id="257313.BP0001"/>
<dbReference type="PaxDb" id="257313-BP0001"/>
<dbReference type="GeneID" id="69599904"/>
<dbReference type="KEGG" id="bpe:BP0001"/>
<dbReference type="PATRIC" id="fig|257313.5.peg.1"/>
<dbReference type="eggNOG" id="COG0445">
    <property type="taxonomic scope" value="Bacteria"/>
</dbReference>
<dbReference type="HOGENOM" id="CLU_007831_2_2_4"/>
<dbReference type="Proteomes" id="UP000002676">
    <property type="component" value="Chromosome"/>
</dbReference>
<dbReference type="GO" id="GO:0005829">
    <property type="term" value="C:cytosol"/>
    <property type="evidence" value="ECO:0007669"/>
    <property type="project" value="TreeGrafter"/>
</dbReference>
<dbReference type="GO" id="GO:0050660">
    <property type="term" value="F:flavin adenine dinucleotide binding"/>
    <property type="evidence" value="ECO:0007669"/>
    <property type="project" value="UniProtKB-UniRule"/>
</dbReference>
<dbReference type="GO" id="GO:0030488">
    <property type="term" value="P:tRNA methylation"/>
    <property type="evidence" value="ECO:0007669"/>
    <property type="project" value="TreeGrafter"/>
</dbReference>
<dbReference type="GO" id="GO:0002098">
    <property type="term" value="P:tRNA wobble uridine modification"/>
    <property type="evidence" value="ECO:0007669"/>
    <property type="project" value="InterPro"/>
</dbReference>
<dbReference type="FunFam" id="1.10.10.1800:FF:000001">
    <property type="entry name" value="tRNA uridine 5-carboxymethylaminomethyl modification enzyme MnmG"/>
    <property type="match status" value="1"/>
</dbReference>
<dbReference type="FunFam" id="1.10.150.570:FF:000001">
    <property type="entry name" value="tRNA uridine 5-carboxymethylaminomethyl modification enzyme MnmG"/>
    <property type="match status" value="1"/>
</dbReference>
<dbReference type="FunFam" id="3.50.50.60:FF:000002">
    <property type="entry name" value="tRNA uridine 5-carboxymethylaminomethyl modification enzyme MnmG"/>
    <property type="match status" value="1"/>
</dbReference>
<dbReference type="FunFam" id="3.50.50.60:FF:000010">
    <property type="entry name" value="tRNA uridine 5-carboxymethylaminomethyl modification enzyme MnmG"/>
    <property type="match status" value="1"/>
</dbReference>
<dbReference type="Gene3D" id="3.50.50.60">
    <property type="entry name" value="FAD/NAD(P)-binding domain"/>
    <property type="match status" value="2"/>
</dbReference>
<dbReference type="Gene3D" id="1.10.150.570">
    <property type="entry name" value="GidA associated domain, C-terminal subdomain"/>
    <property type="match status" value="1"/>
</dbReference>
<dbReference type="Gene3D" id="1.10.10.1800">
    <property type="entry name" value="tRNA uridine 5-carboxymethylaminomethyl modification enzyme MnmG/GidA"/>
    <property type="match status" value="1"/>
</dbReference>
<dbReference type="HAMAP" id="MF_00129">
    <property type="entry name" value="MnmG_GidA"/>
    <property type="match status" value="1"/>
</dbReference>
<dbReference type="InterPro" id="IPR036188">
    <property type="entry name" value="FAD/NAD-bd_sf"/>
</dbReference>
<dbReference type="InterPro" id="IPR049312">
    <property type="entry name" value="GIDA_C_N"/>
</dbReference>
<dbReference type="InterPro" id="IPR004416">
    <property type="entry name" value="MnmG"/>
</dbReference>
<dbReference type="InterPro" id="IPR002218">
    <property type="entry name" value="MnmG-rel"/>
</dbReference>
<dbReference type="InterPro" id="IPR020595">
    <property type="entry name" value="MnmG-rel_CS"/>
</dbReference>
<dbReference type="InterPro" id="IPR026904">
    <property type="entry name" value="MnmG_C"/>
</dbReference>
<dbReference type="InterPro" id="IPR047001">
    <property type="entry name" value="MnmG_C_subdom"/>
</dbReference>
<dbReference type="InterPro" id="IPR044920">
    <property type="entry name" value="MnmG_C_subdom_sf"/>
</dbReference>
<dbReference type="InterPro" id="IPR040131">
    <property type="entry name" value="MnmG_N"/>
</dbReference>
<dbReference type="NCBIfam" id="TIGR00136">
    <property type="entry name" value="mnmG_gidA"/>
    <property type="match status" value="1"/>
</dbReference>
<dbReference type="PANTHER" id="PTHR11806">
    <property type="entry name" value="GLUCOSE INHIBITED DIVISION PROTEIN A"/>
    <property type="match status" value="1"/>
</dbReference>
<dbReference type="PANTHER" id="PTHR11806:SF0">
    <property type="entry name" value="PROTEIN MTO1 HOMOLOG, MITOCHONDRIAL"/>
    <property type="match status" value="1"/>
</dbReference>
<dbReference type="Pfam" id="PF01134">
    <property type="entry name" value="GIDA"/>
    <property type="match status" value="1"/>
</dbReference>
<dbReference type="Pfam" id="PF21680">
    <property type="entry name" value="GIDA_C_1st"/>
    <property type="match status" value="1"/>
</dbReference>
<dbReference type="Pfam" id="PF13932">
    <property type="entry name" value="SAM_GIDA_C"/>
    <property type="match status" value="1"/>
</dbReference>
<dbReference type="SMART" id="SM01228">
    <property type="entry name" value="GIDA_assoc_3"/>
    <property type="match status" value="1"/>
</dbReference>
<dbReference type="SUPFAM" id="SSF51905">
    <property type="entry name" value="FAD/NAD(P)-binding domain"/>
    <property type="match status" value="1"/>
</dbReference>
<dbReference type="PROSITE" id="PS01280">
    <property type="entry name" value="GIDA_1"/>
    <property type="match status" value="1"/>
</dbReference>
<dbReference type="PROSITE" id="PS01281">
    <property type="entry name" value="GIDA_2"/>
    <property type="match status" value="1"/>
</dbReference>
<comment type="function">
    <text evidence="1">NAD-binding protein involved in the addition of a carboxymethylaminomethyl (cmnm) group at the wobble position (U34) of certain tRNAs, forming tRNA-cmnm(5)s(2)U34.</text>
</comment>
<comment type="cofactor">
    <cofactor evidence="1">
        <name>FAD</name>
        <dbReference type="ChEBI" id="CHEBI:57692"/>
    </cofactor>
</comment>
<comment type="subunit">
    <text evidence="1">Homodimer. Heterotetramer of two MnmE and two MnmG subunits.</text>
</comment>
<comment type="subcellular location">
    <subcellularLocation>
        <location evidence="1">Cytoplasm</location>
    </subcellularLocation>
</comment>
<comment type="similarity">
    <text evidence="1">Belongs to the MnmG family.</text>
</comment>
<reference key="1">
    <citation type="journal article" date="2003" name="Nat. Genet.">
        <title>Comparative analysis of the genome sequences of Bordetella pertussis, Bordetella parapertussis and Bordetella bronchiseptica.</title>
        <authorList>
            <person name="Parkhill J."/>
            <person name="Sebaihia M."/>
            <person name="Preston A."/>
            <person name="Murphy L.D."/>
            <person name="Thomson N.R."/>
            <person name="Harris D.E."/>
            <person name="Holden M.T.G."/>
            <person name="Churcher C.M."/>
            <person name="Bentley S.D."/>
            <person name="Mungall K.L."/>
            <person name="Cerdeno-Tarraga A.-M."/>
            <person name="Temple L."/>
            <person name="James K.D."/>
            <person name="Harris B."/>
            <person name="Quail M.A."/>
            <person name="Achtman M."/>
            <person name="Atkin R."/>
            <person name="Baker S."/>
            <person name="Basham D."/>
            <person name="Bason N."/>
            <person name="Cherevach I."/>
            <person name="Chillingworth T."/>
            <person name="Collins M."/>
            <person name="Cronin A."/>
            <person name="Davis P."/>
            <person name="Doggett J."/>
            <person name="Feltwell T."/>
            <person name="Goble A."/>
            <person name="Hamlin N."/>
            <person name="Hauser H."/>
            <person name="Holroyd S."/>
            <person name="Jagels K."/>
            <person name="Leather S."/>
            <person name="Moule S."/>
            <person name="Norberczak H."/>
            <person name="O'Neil S."/>
            <person name="Ormond D."/>
            <person name="Price C."/>
            <person name="Rabbinowitsch E."/>
            <person name="Rutter S."/>
            <person name="Sanders M."/>
            <person name="Saunders D."/>
            <person name="Seeger K."/>
            <person name="Sharp S."/>
            <person name="Simmonds M."/>
            <person name="Skelton J."/>
            <person name="Squares R."/>
            <person name="Squares S."/>
            <person name="Stevens K."/>
            <person name="Unwin L."/>
            <person name="Whitehead S."/>
            <person name="Barrell B.G."/>
            <person name="Maskell D.J."/>
        </authorList>
    </citation>
    <scope>NUCLEOTIDE SEQUENCE [LARGE SCALE GENOMIC DNA]</scope>
    <source>
        <strain>Tohama I / ATCC BAA-589 / NCTC 13251</strain>
    </source>
</reference>
<evidence type="ECO:0000255" key="1">
    <source>
        <dbReference type="HAMAP-Rule" id="MF_00129"/>
    </source>
</evidence>
<protein>
    <recommendedName>
        <fullName evidence="1">tRNA uridine 5-carboxymethylaminomethyl modification enzyme MnmG</fullName>
    </recommendedName>
    <alternativeName>
        <fullName evidence="1">Glucose-inhibited division protein A</fullName>
    </alternativeName>
</protein>
<feature type="chain" id="PRO_0000117065" description="tRNA uridine 5-carboxymethylaminomethyl modification enzyme MnmG">
    <location>
        <begin position="1"/>
        <end position="639"/>
    </location>
</feature>
<feature type="binding site" evidence="1">
    <location>
        <begin position="13"/>
        <end position="18"/>
    </location>
    <ligand>
        <name>FAD</name>
        <dbReference type="ChEBI" id="CHEBI:57692"/>
    </ligand>
</feature>
<feature type="binding site" evidence="1">
    <location>
        <begin position="274"/>
        <end position="288"/>
    </location>
    <ligand>
        <name>NAD(+)</name>
        <dbReference type="ChEBI" id="CHEBI:57540"/>
    </ligand>
</feature>